<evidence type="ECO:0000250" key="1">
    <source>
        <dbReference type="UniProtKB" id="A0JNT9"/>
    </source>
</evidence>
<evidence type="ECO:0000255" key="2"/>
<evidence type="ECO:0000256" key="3">
    <source>
        <dbReference type="SAM" id="MobiDB-lite"/>
    </source>
</evidence>
<evidence type="ECO:0000305" key="4"/>
<name>BICL1_XENTR</name>
<organism>
    <name type="scientific">Xenopus tropicalis</name>
    <name type="common">Western clawed frog</name>
    <name type="synonym">Silurana tropicalis</name>
    <dbReference type="NCBI Taxonomy" id="8364"/>
    <lineage>
        <taxon>Eukaryota</taxon>
        <taxon>Metazoa</taxon>
        <taxon>Chordata</taxon>
        <taxon>Craniata</taxon>
        <taxon>Vertebrata</taxon>
        <taxon>Euteleostomi</taxon>
        <taxon>Amphibia</taxon>
        <taxon>Batrachia</taxon>
        <taxon>Anura</taxon>
        <taxon>Pipoidea</taxon>
        <taxon>Pipidae</taxon>
        <taxon>Xenopodinae</taxon>
        <taxon>Xenopus</taxon>
        <taxon>Silurana</taxon>
    </lineage>
</organism>
<sequence length="599" mass="69257">MELPISFLSDSSRPAASSERGDQAALGRGELEFDEELVFLAAEGEGDPEEIEGPEVREQSELLCIIRQKEKDLVLAARLGKALLERNQDMSRRYEEMQREMTDKLEHLEQEKHELKRKLENREGEWEGRVSELESDVKLLQEELEKQQVNLREADREKLSVVQELSEQNQRLLEQLSRATEMERQLSQQVNVLQEEFREKSLSTSQHVSRLESLLAEIKMLSDRKRELEQQLSTIMEENEQLQGLVEELQDKELSLNQQNFGKDLQLRESQLEIEEMRLSYRQLEGKLEELREEKSLQHMNSTSTSLLSEIEQSIEAEEQEQEREQLRLQLWEAHCQVRSLCCQLRGNESADSAVSTDSSMDESSETSSAKDVPAGSLRTALSELKSLILSILETCDSASSRKCEDDGLEEQIKQTSEDSRALRELLQGEQMRMKQTFDELQELHKQVTLLSVEMNALKEERDRLLVLTQNDETQEQLMKAIKDRDEAISKKTAVELELAKCRIDLMSLNTQLLDAIQQKLNLSQQLEAWQDDMHRVIDQQLMDKHQKEWSQPAYSFSNSHHVKQCSKAAAMKHAERPGEESIGAEGRRLFSFLKKTKC</sequence>
<accession>Q0V9T6</accession>
<feature type="chain" id="PRO_0000302860" description="BICD family-like cargo adapter 1">
    <location>
        <begin position="1"/>
        <end position="599"/>
    </location>
</feature>
<feature type="region of interest" description="Disordered" evidence="3">
    <location>
        <begin position="1"/>
        <end position="27"/>
    </location>
</feature>
<feature type="region of interest" description="Disordered" evidence="3">
    <location>
        <begin position="352"/>
        <end position="375"/>
    </location>
</feature>
<feature type="coiled-coil region" evidence="2">
    <location>
        <begin position="80"/>
        <end position="341"/>
    </location>
</feature>
<feature type="coiled-coil region" evidence="2">
    <location>
        <begin position="405"/>
        <end position="536"/>
    </location>
</feature>
<feature type="short sequence motif" description="CC1 box" evidence="1">
    <location>
        <begin position="76"/>
        <end position="80"/>
    </location>
</feature>
<protein>
    <recommendedName>
        <fullName>BICD family-like cargo adapter 1</fullName>
    </recommendedName>
    <alternativeName>
        <fullName>Bicaudal D-related protein 1</fullName>
        <shortName>BICD-related protein 1</shortName>
        <shortName>BICDR-1</shortName>
    </alternativeName>
    <alternativeName>
        <fullName>Coiled-coil domain-containing protein 64A</fullName>
    </alternativeName>
</protein>
<proteinExistence type="evidence at transcript level"/>
<gene>
    <name type="primary">bicdl1</name>
    <name type="synonym">bicdr1</name>
    <name type="synonym">ccdc64</name>
</gene>
<keyword id="KW-0175">Coiled coil</keyword>
<keyword id="KW-0963">Cytoplasm</keyword>
<keyword id="KW-0206">Cytoskeleton</keyword>
<keyword id="KW-0524">Neurogenesis</keyword>
<keyword id="KW-1185">Reference proteome</keyword>
<keyword id="KW-0813">Transport</keyword>
<comment type="function">
    <text evidence="1">Acts as an adapter protein linking the dynein motor complex to various cargos and converts dynein from a non-processive to a highly processive motor in the presence of dynactin. Facilitates the interaction between dynein and dynactin and activates dynein processivity (the ability to move along a microtubule for a long distance without falling off the track). Predominantly recruits 2 dyneins, which increases both the force and speed of the microtubule motor. Component of secretory vesicle machinery in developing neurons that acts as a regulator of neurite outgrowth. Regulates the secretory vesicle transport by controlling the accumulation of Rab6-containing secretory vesicles in the pericentrosomal region restricting anterograde secretory transport during the early phase of neuronal differentiation, thereby inhibiting neuritogenesis.</text>
</comment>
<comment type="subunit">
    <text evidence="1">Part of a tripartite complex with dynein and dynactin, acts an adapter linking the dynein motor complex and dynactin. Interacts with KIF1C. Interacts with RAB6A and RAB6B; interaction is specific to Rab6.</text>
</comment>
<comment type="subcellular location">
    <subcellularLocation>
        <location evidence="1">Cytoplasm</location>
        <location evidence="1">Cytoskeleton</location>
        <location evidence="1">Microtubule organizing center</location>
        <location evidence="1">Centrosome</location>
    </subcellularLocation>
    <text evidence="1">Localizes around the centrosome.</text>
</comment>
<comment type="similarity">
    <text evidence="4">Belongs to the BICDR family.</text>
</comment>
<reference key="1">
    <citation type="submission" date="2006-08" db="EMBL/GenBank/DDBJ databases">
        <authorList>
            <consortium name="NIH - Xenopus Gene Collection (XGC) project"/>
        </authorList>
    </citation>
    <scope>NUCLEOTIDE SEQUENCE [LARGE SCALE MRNA]</scope>
    <source>
        <tissue>Testis</tissue>
    </source>
</reference>
<dbReference type="EMBL" id="BC121401">
    <property type="protein sequence ID" value="AAI21402.1"/>
    <property type="molecule type" value="mRNA"/>
</dbReference>
<dbReference type="RefSeq" id="NP_001072328.1">
    <property type="nucleotide sequence ID" value="NM_001078860.1"/>
</dbReference>
<dbReference type="SMR" id="Q0V9T6"/>
<dbReference type="FunCoup" id="Q0V9T6">
    <property type="interactions" value="93"/>
</dbReference>
<dbReference type="STRING" id="8364.ENSXETP00000015666"/>
<dbReference type="PaxDb" id="8364-ENSXETP00000026607"/>
<dbReference type="DNASU" id="779781"/>
<dbReference type="GeneID" id="779781"/>
<dbReference type="KEGG" id="xtr:779781"/>
<dbReference type="AGR" id="Xenbase:XB-GENE-5811431"/>
<dbReference type="CTD" id="92558"/>
<dbReference type="Xenbase" id="XB-GENE-5811431">
    <property type="gene designation" value="bicdl1"/>
</dbReference>
<dbReference type="eggNOG" id="ENOG502QUA9">
    <property type="taxonomic scope" value="Eukaryota"/>
</dbReference>
<dbReference type="HOGENOM" id="CLU_029068_0_0_1"/>
<dbReference type="InParanoid" id="Q0V9T6"/>
<dbReference type="OrthoDB" id="9451547at2759"/>
<dbReference type="TreeFam" id="TF326671"/>
<dbReference type="Proteomes" id="UP000008143">
    <property type="component" value="Chromosome 1"/>
</dbReference>
<dbReference type="Bgee" id="ENSXETG00000012189">
    <property type="expression patterns" value="Expressed in 2-cell stage embryo and 11 other cell types or tissues"/>
</dbReference>
<dbReference type="ExpressionAtlas" id="Q0V9T6">
    <property type="expression patterns" value="baseline and differential"/>
</dbReference>
<dbReference type="GO" id="GO:0005813">
    <property type="term" value="C:centrosome"/>
    <property type="evidence" value="ECO:0000250"/>
    <property type="project" value="UniProtKB"/>
</dbReference>
<dbReference type="GO" id="GO:0005737">
    <property type="term" value="C:cytoplasm"/>
    <property type="evidence" value="ECO:0007669"/>
    <property type="project" value="UniProtKB-KW"/>
</dbReference>
<dbReference type="GO" id="GO:0034452">
    <property type="term" value="F:dynactin binding"/>
    <property type="evidence" value="ECO:0000250"/>
    <property type="project" value="UniProtKB"/>
</dbReference>
<dbReference type="GO" id="GO:0031267">
    <property type="term" value="F:small GTPase binding"/>
    <property type="evidence" value="ECO:0000250"/>
    <property type="project" value="UniProtKB"/>
</dbReference>
<dbReference type="GO" id="GO:0055107">
    <property type="term" value="P:Golgi to secretory granule transport"/>
    <property type="evidence" value="ECO:0000250"/>
    <property type="project" value="UniProtKB"/>
</dbReference>
<dbReference type="GO" id="GO:0031175">
    <property type="term" value="P:neuron projection development"/>
    <property type="evidence" value="ECO:0000250"/>
    <property type="project" value="UniProtKB"/>
</dbReference>
<dbReference type="InterPro" id="IPR051149">
    <property type="entry name" value="Spindly/BICDR_Dynein_Adapter"/>
</dbReference>
<dbReference type="PANTHER" id="PTHR32123">
    <property type="entry name" value="BICD FAMILY-LIKE CARGO ADAPTER"/>
    <property type="match status" value="1"/>
</dbReference>
<dbReference type="PANTHER" id="PTHR32123:SF12">
    <property type="entry name" value="BICD FAMILY-LIKE CARGO ADAPTER 1"/>
    <property type="match status" value="1"/>
</dbReference>